<sequence>MGQKVNPIGFRLGVVKGWESNWYGGKTFADKLVEDEQIRKYVLARIPKGGISKIVIERTIKRVTLTINTARPGVVIGKGGAEVDKIKEELKKITGKDVQINIFEIKRPEMEALLVGESIAQQLKARISYRRAMKQAIAGTMRVGALGIKIKLSGRLGGAEMARTDQYKEGRIPLHTLRADIDYAVSEALTVYGKIGIKVWIFKGEVYGKRDLSPNVGNAASGASSSSNNDNASPNQGGPRRKRGGEGNRKKSNK</sequence>
<feature type="chain" id="PRO_0000293780" description="Small ribosomal subunit protein uS3">
    <location>
        <begin position="1"/>
        <end position="254"/>
    </location>
</feature>
<feature type="domain" description="KH type-2" evidence="1">
    <location>
        <begin position="38"/>
        <end position="106"/>
    </location>
</feature>
<feature type="region of interest" description="Disordered" evidence="2">
    <location>
        <begin position="215"/>
        <end position="254"/>
    </location>
</feature>
<feature type="compositionally biased region" description="Low complexity" evidence="2">
    <location>
        <begin position="215"/>
        <end position="238"/>
    </location>
</feature>
<feature type="compositionally biased region" description="Basic and acidic residues" evidence="2">
    <location>
        <begin position="244"/>
        <end position="254"/>
    </location>
</feature>
<gene>
    <name evidence="1" type="primary">rpsC</name>
    <name type="ordered locus">CHU_3156</name>
</gene>
<accession>Q11QB8</accession>
<reference key="1">
    <citation type="journal article" date="2007" name="Appl. Environ. Microbiol.">
        <title>Genome sequence of the cellulolytic gliding bacterium Cytophaga hutchinsonii.</title>
        <authorList>
            <person name="Xie G."/>
            <person name="Bruce D.C."/>
            <person name="Challacombe J.F."/>
            <person name="Chertkov O."/>
            <person name="Detter J.C."/>
            <person name="Gilna P."/>
            <person name="Han C.S."/>
            <person name="Lucas S."/>
            <person name="Misra M."/>
            <person name="Myers G.L."/>
            <person name="Richardson P."/>
            <person name="Tapia R."/>
            <person name="Thayer N."/>
            <person name="Thompson L.S."/>
            <person name="Brettin T.S."/>
            <person name="Henrissat B."/>
            <person name="Wilson D.B."/>
            <person name="McBride M.J."/>
        </authorList>
    </citation>
    <scope>NUCLEOTIDE SEQUENCE [LARGE SCALE GENOMIC DNA]</scope>
    <source>
        <strain>ATCC 33406 / DSM 1761 / JCM 20678 / CIP 103989 / IAM 12607 / NBRC 15051 / NCIMB 9469 / D465</strain>
    </source>
</reference>
<name>RS3_CYTH3</name>
<dbReference type="EMBL" id="CP000383">
    <property type="protein sequence ID" value="ABG60396.1"/>
    <property type="molecule type" value="Genomic_DNA"/>
</dbReference>
<dbReference type="RefSeq" id="WP_011586505.1">
    <property type="nucleotide sequence ID" value="NC_008255.1"/>
</dbReference>
<dbReference type="SMR" id="Q11QB8"/>
<dbReference type="STRING" id="269798.CHU_3156"/>
<dbReference type="KEGG" id="chu:CHU_3156"/>
<dbReference type="eggNOG" id="COG0092">
    <property type="taxonomic scope" value="Bacteria"/>
</dbReference>
<dbReference type="HOGENOM" id="CLU_058591_0_2_10"/>
<dbReference type="OrthoDB" id="9806396at2"/>
<dbReference type="Proteomes" id="UP000001822">
    <property type="component" value="Chromosome"/>
</dbReference>
<dbReference type="GO" id="GO:0022627">
    <property type="term" value="C:cytosolic small ribosomal subunit"/>
    <property type="evidence" value="ECO:0007669"/>
    <property type="project" value="TreeGrafter"/>
</dbReference>
<dbReference type="GO" id="GO:0003729">
    <property type="term" value="F:mRNA binding"/>
    <property type="evidence" value="ECO:0007669"/>
    <property type="project" value="UniProtKB-UniRule"/>
</dbReference>
<dbReference type="GO" id="GO:0019843">
    <property type="term" value="F:rRNA binding"/>
    <property type="evidence" value="ECO:0007669"/>
    <property type="project" value="UniProtKB-UniRule"/>
</dbReference>
<dbReference type="GO" id="GO:0003735">
    <property type="term" value="F:structural constituent of ribosome"/>
    <property type="evidence" value="ECO:0007669"/>
    <property type="project" value="InterPro"/>
</dbReference>
<dbReference type="GO" id="GO:0006412">
    <property type="term" value="P:translation"/>
    <property type="evidence" value="ECO:0007669"/>
    <property type="project" value="UniProtKB-UniRule"/>
</dbReference>
<dbReference type="CDD" id="cd02412">
    <property type="entry name" value="KH-II_30S_S3"/>
    <property type="match status" value="1"/>
</dbReference>
<dbReference type="FunFam" id="3.30.300.20:FF:000001">
    <property type="entry name" value="30S ribosomal protein S3"/>
    <property type="match status" value="1"/>
</dbReference>
<dbReference type="Gene3D" id="3.30.300.20">
    <property type="match status" value="1"/>
</dbReference>
<dbReference type="Gene3D" id="3.30.1140.32">
    <property type="entry name" value="Ribosomal protein S3, C-terminal domain"/>
    <property type="match status" value="1"/>
</dbReference>
<dbReference type="HAMAP" id="MF_01309_B">
    <property type="entry name" value="Ribosomal_uS3_B"/>
    <property type="match status" value="1"/>
</dbReference>
<dbReference type="InterPro" id="IPR004087">
    <property type="entry name" value="KH_dom"/>
</dbReference>
<dbReference type="InterPro" id="IPR015946">
    <property type="entry name" value="KH_dom-like_a/b"/>
</dbReference>
<dbReference type="InterPro" id="IPR004044">
    <property type="entry name" value="KH_dom_type_2"/>
</dbReference>
<dbReference type="InterPro" id="IPR009019">
    <property type="entry name" value="KH_sf_prok-type"/>
</dbReference>
<dbReference type="InterPro" id="IPR036419">
    <property type="entry name" value="Ribosomal_S3_C_sf"/>
</dbReference>
<dbReference type="InterPro" id="IPR005704">
    <property type="entry name" value="Ribosomal_uS3_bac-typ"/>
</dbReference>
<dbReference type="InterPro" id="IPR001351">
    <property type="entry name" value="Ribosomal_uS3_C"/>
</dbReference>
<dbReference type="InterPro" id="IPR018280">
    <property type="entry name" value="Ribosomal_uS3_CS"/>
</dbReference>
<dbReference type="NCBIfam" id="TIGR01009">
    <property type="entry name" value="rpsC_bact"/>
    <property type="match status" value="1"/>
</dbReference>
<dbReference type="PANTHER" id="PTHR11760">
    <property type="entry name" value="30S/40S RIBOSOMAL PROTEIN S3"/>
    <property type="match status" value="1"/>
</dbReference>
<dbReference type="PANTHER" id="PTHR11760:SF19">
    <property type="entry name" value="SMALL RIBOSOMAL SUBUNIT PROTEIN US3C"/>
    <property type="match status" value="1"/>
</dbReference>
<dbReference type="Pfam" id="PF07650">
    <property type="entry name" value="KH_2"/>
    <property type="match status" value="1"/>
</dbReference>
<dbReference type="Pfam" id="PF00189">
    <property type="entry name" value="Ribosomal_S3_C"/>
    <property type="match status" value="1"/>
</dbReference>
<dbReference type="SMART" id="SM00322">
    <property type="entry name" value="KH"/>
    <property type="match status" value="1"/>
</dbReference>
<dbReference type="SUPFAM" id="SSF54814">
    <property type="entry name" value="Prokaryotic type KH domain (KH-domain type II)"/>
    <property type="match status" value="1"/>
</dbReference>
<dbReference type="SUPFAM" id="SSF54821">
    <property type="entry name" value="Ribosomal protein S3 C-terminal domain"/>
    <property type="match status" value="1"/>
</dbReference>
<dbReference type="PROSITE" id="PS50823">
    <property type="entry name" value="KH_TYPE_2"/>
    <property type="match status" value="1"/>
</dbReference>
<dbReference type="PROSITE" id="PS00548">
    <property type="entry name" value="RIBOSOMAL_S3"/>
    <property type="match status" value="1"/>
</dbReference>
<keyword id="KW-1185">Reference proteome</keyword>
<keyword id="KW-0687">Ribonucleoprotein</keyword>
<keyword id="KW-0689">Ribosomal protein</keyword>
<keyword id="KW-0694">RNA-binding</keyword>
<keyword id="KW-0699">rRNA-binding</keyword>
<organism>
    <name type="scientific">Cytophaga hutchinsonii (strain ATCC 33406 / DSM 1761 / CIP 103989 / NBRC 15051 / NCIMB 9469 / D465)</name>
    <dbReference type="NCBI Taxonomy" id="269798"/>
    <lineage>
        <taxon>Bacteria</taxon>
        <taxon>Pseudomonadati</taxon>
        <taxon>Bacteroidota</taxon>
        <taxon>Cytophagia</taxon>
        <taxon>Cytophagales</taxon>
        <taxon>Cytophagaceae</taxon>
        <taxon>Cytophaga</taxon>
    </lineage>
</organism>
<protein>
    <recommendedName>
        <fullName evidence="1">Small ribosomal subunit protein uS3</fullName>
    </recommendedName>
    <alternativeName>
        <fullName evidence="3">30S ribosomal protein S3</fullName>
    </alternativeName>
</protein>
<evidence type="ECO:0000255" key="1">
    <source>
        <dbReference type="HAMAP-Rule" id="MF_01309"/>
    </source>
</evidence>
<evidence type="ECO:0000256" key="2">
    <source>
        <dbReference type="SAM" id="MobiDB-lite"/>
    </source>
</evidence>
<evidence type="ECO:0000305" key="3"/>
<comment type="function">
    <text evidence="1">Binds the lower part of the 30S subunit head. Binds mRNA in the 70S ribosome, positioning it for translation.</text>
</comment>
<comment type="subunit">
    <text evidence="1">Part of the 30S ribosomal subunit. Forms a tight complex with proteins S10 and S14.</text>
</comment>
<comment type="similarity">
    <text evidence="1">Belongs to the universal ribosomal protein uS3 family.</text>
</comment>
<proteinExistence type="inferred from homology"/>